<evidence type="ECO:0000255" key="1">
    <source>
        <dbReference type="HAMAP-Rule" id="MF_00051"/>
    </source>
</evidence>
<name>GLYA_PROM4</name>
<comment type="function">
    <text evidence="1">Catalyzes the reversible interconversion of serine and glycine with tetrahydrofolate (THF) serving as the one-carbon carrier. This reaction serves as the major source of one-carbon groups required for the biosynthesis of purines, thymidylate, methionine, and other important biomolecules. Also exhibits THF-independent aldolase activity toward beta-hydroxyamino acids, producing glycine and aldehydes, via a retro-aldol mechanism.</text>
</comment>
<comment type="catalytic activity">
    <reaction evidence="1">
        <text>(6R)-5,10-methylene-5,6,7,8-tetrahydrofolate + glycine + H2O = (6S)-5,6,7,8-tetrahydrofolate + L-serine</text>
        <dbReference type="Rhea" id="RHEA:15481"/>
        <dbReference type="ChEBI" id="CHEBI:15377"/>
        <dbReference type="ChEBI" id="CHEBI:15636"/>
        <dbReference type="ChEBI" id="CHEBI:33384"/>
        <dbReference type="ChEBI" id="CHEBI:57305"/>
        <dbReference type="ChEBI" id="CHEBI:57453"/>
        <dbReference type="EC" id="2.1.2.1"/>
    </reaction>
</comment>
<comment type="cofactor">
    <cofactor evidence="1">
        <name>pyridoxal 5'-phosphate</name>
        <dbReference type="ChEBI" id="CHEBI:597326"/>
    </cofactor>
</comment>
<comment type="pathway">
    <text evidence="1">One-carbon metabolism; tetrahydrofolate interconversion.</text>
</comment>
<comment type="pathway">
    <text evidence="1">Amino-acid biosynthesis; glycine biosynthesis; glycine from L-serine: step 1/1.</text>
</comment>
<comment type="subunit">
    <text evidence="1">Homodimer.</text>
</comment>
<comment type="subcellular location">
    <subcellularLocation>
        <location evidence="1">Cytoplasm</location>
    </subcellularLocation>
</comment>
<comment type="similarity">
    <text evidence="1">Belongs to the SHMT family.</text>
</comment>
<protein>
    <recommendedName>
        <fullName evidence="1">Serine hydroxymethyltransferase</fullName>
        <shortName evidence="1">SHMT</shortName>
        <shortName evidence="1">Serine methylase</shortName>
        <ecNumber evidence="1">2.1.2.1</ecNumber>
    </recommendedName>
</protein>
<organism>
    <name type="scientific">Prochlorococcus marinus (strain MIT 9211)</name>
    <dbReference type="NCBI Taxonomy" id="93059"/>
    <lineage>
        <taxon>Bacteria</taxon>
        <taxon>Bacillati</taxon>
        <taxon>Cyanobacteriota</taxon>
        <taxon>Cyanophyceae</taxon>
        <taxon>Synechococcales</taxon>
        <taxon>Prochlorococcaceae</taxon>
        <taxon>Prochlorococcus</taxon>
    </lineage>
</organism>
<proteinExistence type="inferred from homology"/>
<dbReference type="EC" id="2.1.2.1" evidence="1"/>
<dbReference type="EMBL" id="CP000878">
    <property type="protein sequence ID" value="ABX08215.1"/>
    <property type="molecule type" value="Genomic_DNA"/>
</dbReference>
<dbReference type="RefSeq" id="WP_012194840.1">
    <property type="nucleotide sequence ID" value="NC_009976.1"/>
</dbReference>
<dbReference type="SMR" id="A9BDM9"/>
<dbReference type="STRING" id="93059.P9211_02841"/>
<dbReference type="KEGG" id="pmj:P9211_02841"/>
<dbReference type="eggNOG" id="COG0112">
    <property type="taxonomic scope" value="Bacteria"/>
</dbReference>
<dbReference type="HOGENOM" id="CLU_022477_2_1_3"/>
<dbReference type="OrthoDB" id="9803846at2"/>
<dbReference type="UniPathway" id="UPA00193"/>
<dbReference type="UniPathway" id="UPA00288">
    <property type="reaction ID" value="UER01023"/>
</dbReference>
<dbReference type="Proteomes" id="UP000000788">
    <property type="component" value="Chromosome"/>
</dbReference>
<dbReference type="GO" id="GO:0005829">
    <property type="term" value="C:cytosol"/>
    <property type="evidence" value="ECO:0007669"/>
    <property type="project" value="TreeGrafter"/>
</dbReference>
<dbReference type="GO" id="GO:0004372">
    <property type="term" value="F:glycine hydroxymethyltransferase activity"/>
    <property type="evidence" value="ECO:0007669"/>
    <property type="project" value="UniProtKB-UniRule"/>
</dbReference>
<dbReference type="GO" id="GO:0030170">
    <property type="term" value="F:pyridoxal phosphate binding"/>
    <property type="evidence" value="ECO:0007669"/>
    <property type="project" value="UniProtKB-UniRule"/>
</dbReference>
<dbReference type="GO" id="GO:0019264">
    <property type="term" value="P:glycine biosynthetic process from serine"/>
    <property type="evidence" value="ECO:0007669"/>
    <property type="project" value="UniProtKB-UniRule"/>
</dbReference>
<dbReference type="GO" id="GO:0035999">
    <property type="term" value="P:tetrahydrofolate interconversion"/>
    <property type="evidence" value="ECO:0007669"/>
    <property type="project" value="UniProtKB-UniRule"/>
</dbReference>
<dbReference type="CDD" id="cd00378">
    <property type="entry name" value="SHMT"/>
    <property type="match status" value="1"/>
</dbReference>
<dbReference type="FunFam" id="3.40.640.10:FF:000001">
    <property type="entry name" value="Serine hydroxymethyltransferase"/>
    <property type="match status" value="1"/>
</dbReference>
<dbReference type="Gene3D" id="3.90.1150.10">
    <property type="entry name" value="Aspartate Aminotransferase, domain 1"/>
    <property type="match status" value="1"/>
</dbReference>
<dbReference type="Gene3D" id="3.40.640.10">
    <property type="entry name" value="Type I PLP-dependent aspartate aminotransferase-like (Major domain)"/>
    <property type="match status" value="1"/>
</dbReference>
<dbReference type="HAMAP" id="MF_00051">
    <property type="entry name" value="SHMT"/>
    <property type="match status" value="1"/>
</dbReference>
<dbReference type="InterPro" id="IPR015424">
    <property type="entry name" value="PyrdxlP-dep_Trfase"/>
</dbReference>
<dbReference type="InterPro" id="IPR015421">
    <property type="entry name" value="PyrdxlP-dep_Trfase_major"/>
</dbReference>
<dbReference type="InterPro" id="IPR015422">
    <property type="entry name" value="PyrdxlP-dep_Trfase_small"/>
</dbReference>
<dbReference type="InterPro" id="IPR001085">
    <property type="entry name" value="Ser_HO-MeTrfase"/>
</dbReference>
<dbReference type="InterPro" id="IPR049943">
    <property type="entry name" value="Ser_HO-MeTrfase-like"/>
</dbReference>
<dbReference type="InterPro" id="IPR019798">
    <property type="entry name" value="Ser_HO-MeTrfase_PLP_BS"/>
</dbReference>
<dbReference type="InterPro" id="IPR039429">
    <property type="entry name" value="SHMT-like_dom"/>
</dbReference>
<dbReference type="NCBIfam" id="NF000586">
    <property type="entry name" value="PRK00011.1"/>
    <property type="match status" value="1"/>
</dbReference>
<dbReference type="PANTHER" id="PTHR11680">
    <property type="entry name" value="SERINE HYDROXYMETHYLTRANSFERASE"/>
    <property type="match status" value="1"/>
</dbReference>
<dbReference type="PANTHER" id="PTHR11680:SF35">
    <property type="entry name" value="SERINE HYDROXYMETHYLTRANSFERASE 1"/>
    <property type="match status" value="1"/>
</dbReference>
<dbReference type="Pfam" id="PF00464">
    <property type="entry name" value="SHMT"/>
    <property type="match status" value="1"/>
</dbReference>
<dbReference type="PIRSF" id="PIRSF000412">
    <property type="entry name" value="SHMT"/>
    <property type="match status" value="1"/>
</dbReference>
<dbReference type="SUPFAM" id="SSF53383">
    <property type="entry name" value="PLP-dependent transferases"/>
    <property type="match status" value="1"/>
</dbReference>
<dbReference type="PROSITE" id="PS00096">
    <property type="entry name" value="SHMT"/>
    <property type="match status" value="1"/>
</dbReference>
<reference key="1">
    <citation type="journal article" date="2007" name="PLoS Genet.">
        <title>Patterns and implications of gene gain and loss in the evolution of Prochlorococcus.</title>
        <authorList>
            <person name="Kettler G.C."/>
            <person name="Martiny A.C."/>
            <person name="Huang K."/>
            <person name="Zucker J."/>
            <person name="Coleman M.L."/>
            <person name="Rodrigue S."/>
            <person name="Chen F."/>
            <person name="Lapidus A."/>
            <person name="Ferriera S."/>
            <person name="Johnson J."/>
            <person name="Steglich C."/>
            <person name="Church G.M."/>
            <person name="Richardson P."/>
            <person name="Chisholm S.W."/>
        </authorList>
    </citation>
    <scope>NUCLEOTIDE SEQUENCE [LARGE SCALE GENOMIC DNA]</scope>
    <source>
        <strain>MIT 9211</strain>
    </source>
</reference>
<feature type="chain" id="PRO_1000091569" description="Serine hydroxymethyltransferase">
    <location>
        <begin position="1"/>
        <end position="416"/>
    </location>
</feature>
<feature type="binding site" evidence="1">
    <location>
        <position position="121"/>
    </location>
    <ligand>
        <name>(6S)-5,6,7,8-tetrahydrofolate</name>
        <dbReference type="ChEBI" id="CHEBI:57453"/>
    </ligand>
</feature>
<feature type="binding site" evidence="1">
    <location>
        <begin position="125"/>
        <end position="127"/>
    </location>
    <ligand>
        <name>(6S)-5,6,7,8-tetrahydrofolate</name>
        <dbReference type="ChEBI" id="CHEBI:57453"/>
    </ligand>
</feature>
<feature type="binding site" evidence="1">
    <location>
        <begin position="354"/>
        <end position="356"/>
    </location>
    <ligand>
        <name>(6S)-5,6,7,8-tetrahydrofolate</name>
        <dbReference type="ChEBI" id="CHEBI:57453"/>
    </ligand>
</feature>
<feature type="site" description="Plays an important role in substrate specificity" evidence="1">
    <location>
        <position position="229"/>
    </location>
</feature>
<feature type="modified residue" description="N6-(pyridoxal phosphate)lysine" evidence="1">
    <location>
        <position position="230"/>
    </location>
</feature>
<keyword id="KW-0028">Amino-acid biosynthesis</keyword>
<keyword id="KW-0963">Cytoplasm</keyword>
<keyword id="KW-0554">One-carbon metabolism</keyword>
<keyword id="KW-0663">Pyridoxal phosphate</keyword>
<keyword id="KW-1185">Reference proteome</keyword>
<keyword id="KW-0808">Transferase</keyword>
<sequence length="416" mass="45530">MTHINSALEDADPNIASLIQEESKRQENHLELIASENFTSKAVMEAQGSVLTNKYAEGLPNKRYYGGCEHIDKIEGLAIERAKQLFKAEWANVQPHSGAQANFSVFLSLLEPGEKIMGMDLSHGGHLTHGSPVNVSGKWFKAIHYGVDKETQRLEMENVREIALKNRPKLIICGYSAYPRNIDFLAFRSIADEVGAYLLADMAHIAGLVATGIHPSPIPHCDVVTTTTHKTLRGPRGGLILCRNAEFGKRFDKAVFPGSQGGPLEHVIAAKAVAFGEALKPGFSSYCEQLVKNSKALAKRMQDRGIAVVSNGTDNHIVLLDLRSIDMTGKEADSLVSAINVTTNKNTVPFDPKSPFVTSGLRLGTAALTTRGFDEPAFLEVADLIADRLLNPTDLILKNKCQQRVLDLCNRFPLYD</sequence>
<gene>
    <name evidence="1" type="primary">glyA</name>
    <name type="ordered locus">P9211_02841</name>
</gene>
<accession>A9BDM9</accession>